<comment type="function">
    <text evidence="1 3 7">An RbcL-specific chaperone. Required for assembly of the RbcL8 core (Probable) (PubMed:19081849). The central cleft of the RbcX homodimer (RbcX2) binds the C-terminus of a RbcL monomer, stabilizing the C-terminus and probably preventing its reassociation with chaperonin GroEL-ES. At the same time the peripheral region of RbcX2 binds a second RbcL monomer, bridging the RbcL homodimers in the correct orientation. The RbcX2(2)-bound RbcL dimers then assemble into the RbcL8 core (RbcL8-(RbcX2)8). RbcS binding triggers the release of RbcX2 (By similarity).</text>
</comment>
<comment type="subunit">
    <text evidence="1 3 4">Homodimer (PubMed:19081849, PubMed:21821880). Interacts with the exposed C-terminal peptide of RbcL via its central cleft, contacts a second RbcL monomer via its peripheral polar surface (By similarity).</text>
</comment>
<comment type="subcellular location">
    <subcellularLocation>
        <location evidence="2 3">Carboxysome</location>
    </subcellularLocation>
    <subcellularLocation>
        <location evidence="2 3">Cytoplasm</location>
    </subcellularLocation>
    <text evidence="2 3 6">Most protein is cytoplasmic, but some is in the carboxysome (PubMed:19081849). This cyanobacterium makes beta-type carboxysomes (Probable).</text>
</comment>
<comment type="domain">
    <text evidence="2">The homodimer has 2 functional domains, a central cleft essential for production of soluble RbcL in which the RbcL peptide binds, and a polar surface which plays a role in correct RbcL subunit arrangement.</text>
</comment>
<comment type="similarity">
    <text evidence="2">Belongs to the RbcX family.</text>
</comment>
<evidence type="ECO:0000250" key="1">
    <source>
        <dbReference type="UniProtKB" id="Q44212"/>
    </source>
</evidence>
<evidence type="ECO:0000255" key="2">
    <source>
        <dbReference type="HAMAP-Rule" id="MF_00855"/>
    </source>
</evidence>
<evidence type="ECO:0000269" key="3">
    <source>
    </source>
</evidence>
<evidence type="ECO:0000269" key="4">
    <source>
    </source>
</evidence>
<evidence type="ECO:0000303" key="5">
    <source>
    </source>
</evidence>
<evidence type="ECO:0000305" key="6"/>
<evidence type="ECO:0000305" key="7">
    <source>
    </source>
</evidence>
<evidence type="ECO:0007744" key="8">
    <source>
        <dbReference type="PDB" id="3Q20"/>
    </source>
</evidence>
<evidence type="ECO:0007829" key="9">
    <source>
        <dbReference type="PDB" id="3Q20"/>
    </source>
</evidence>
<accession>Q8DIS6</accession>
<organism>
    <name type="scientific">Thermosynechococcus vestitus (strain NIES-2133 / IAM M-273 / BP-1)</name>
    <dbReference type="NCBI Taxonomy" id="197221"/>
    <lineage>
        <taxon>Bacteria</taxon>
        <taxon>Bacillati</taxon>
        <taxon>Cyanobacteriota</taxon>
        <taxon>Cyanophyceae</taxon>
        <taxon>Acaryochloridales</taxon>
        <taxon>Thermosynechococcaceae</taxon>
        <taxon>Thermosynechococcus</taxon>
    </lineage>
</organism>
<dbReference type="EMBL" id="BA000039">
    <property type="protein sequence ID" value="BAC09057.1"/>
    <property type="molecule type" value="Genomic_DNA"/>
</dbReference>
<dbReference type="RefSeq" id="NP_682295.1">
    <property type="nucleotide sequence ID" value="NC_004113.1"/>
</dbReference>
<dbReference type="RefSeq" id="WP_011057345.1">
    <property type="nucleotide sequence ID" value="NC_004113.1"/>
</dbReference>
<dbReference type="PDB" id="3Q20">
    <property type="method" value="X-ray"/>
    <property type="resolution" value="1.71 A"/>
    <property type="chains" value="A/B=1-126"/>
</dbReference>
<dbReference type="PDBsum" id="3Q20"/>
<dbReference type="SMR" id="Q8DIS6"/>
<dbReference type="STRING" id="197221.gene:10748105"/>
<dbReference type="EnsemblBacteria" id="BAC09057">
    <property type="protein sequence ID" value="BAC09057"/>
    <property type="gene ID" value="BAC09057"/>
</dbReference>
<dbReference type="KEGG" id="tel:tll1505"/>
<dbReference type="PATRIC" id="fig|197221.4.peg.1579"/>
<dbReference type="eggNOG" id="ENOG50315SX">
    <property type="taxonomic scope" value="Bacteria"/>
</dbReference>
<dbReference type="EvolutionaryTrace" id="Q8DIS6"/>
<dbReference type="Proteomes" id="UP000000440">
    <property type="component" value="Chromosome"/>
</dbReference>
<dbReference type="GO" id="GO:0031470">
    <property type="term" value="C:carboxysome"/>
    <property type="evidence" value="ECO:0007669"/>
    <property type="project" value="UniProtKB-SubCell"/>
</dbReference>
<dbReference type="GO" id="GO:0005737">
    <property type="term" value="C:cytoplasm"/>
    <property type="evidence" value="ECO:0007669"/>
    <property type="project" value="UniProtKB-SubCell"/>
</dbReference>
<dbReference type="GO" id="GO:0044183">
    <property type="term" value="F:protein folding chaperone"/>
    <property type="evidence" value="ECO:0007669"/>
    <property type="project" value="InterPro"/>
</dbReference>
<dbReference type="GO" id="GO:0015977">
    <property type="term" value="P:carbon fixation"/>
    <property type="evidence" value="ECO:0007669"/>
    <property type="project" value="UniProtKB-UniRule"/>
</dbReference>
<dbReference type="GO" id="GO:0015979">
    <property type="term" value="P:photosynthesis"/>
    <property type="evidence" value="ECO:0007669"/>
    <property type="project" value="UniProtKB-KW"/>
</dbReference>
<dbReference type="GO" id="GO:0110102">
    <property type="term" value="P:ribulose bisphosphate carboxylase complex assembly"/>
    <property type="evidence" value="ECO:0007669"/>
    <property type="project" value="UniProtKB-UniRule"/>
</dbReference>
<dbReference type="Gene3D" id="1.10.1200.210">
    <property type="entry name" value="Chaperonin-like RbcX"/>
    <property type="match status" value="1"/>
</dbReference>
<dbReference type="HAMAP" id="MF_00855">
    <property type="entry name" value="RbcX"/>
    <property type="match status" value="1"/>
</dbReference>
<dbReference type="InterPro" id="IPR038052">
    <property type="entry name" value="Chaperonin_RbcX_sf"/>
</dbReference>
<dbReference type="InterPro" id="IPR003435">
    <property type="entry name" value="Chaperonin_RcbX"/>
</dbReference>
<dbReference type="InterPro" id="IPR046381">
    <property type="entry name" value="RbcX"/>
</dbReference>
<dbReference type="NCBIfam" id="NF047598">
    <property type="entry name" value="ChaprRbcXCyano"/>
    <property type="match status" value="1"/>
</dbReference>
<dbReference type="PANTHER" id="PTHR33791">
    <property type="entry name" value="CHAPERONIN-LIKE RBCX PROTEIN 1, CHLOROPLASTIC"/>
    <property type="match status" value="1"/>
</dbReference>
<dbReference type="PANTHER" id="PTHR33791:SF1">
    <property type="entry name" value="RUBISCO CHAPERONE RBCX"/>
    <property type="match status" value="1"/>
</dbReference>
<dbReference type="Pfam" id="PF02341">
    <property type="entry name" value="RbcX"/>
    <property type="match status" value="1"/>
</dbReference>
<dbReference type="SUPFAM" id="SSF158615">
    <property type="entry name" value="RbcX-like"/>
    <property type="match status" value="1"/>
</dbReference>
<sequence length="126" mass="14589">MDVKHIAKQTTKTLISYLTYQAVRTVIGQLAETDPPRSLWLHQFTSQESIQDGERYLEALFREQPDLGFRILTVREHLAEMVADYLPEMLRAGIQQANLQQRCQQLERMTQVSEANVENSNLETPE</sequence>
<reference key="1">
    <citation type="journal article" date="2002" name="DNA Res.">
        <title>Complete genome structure of the thermophilic cyanobacterium Thermosynechococcus elongatus BP-1.</title>
        <authorList>
            <person name="Nakamura Y."/>
            <person name="Kaneko T."/>
            <person name="Sato S."/>
            <person name="Ikeuchi M."/>
            <person name="Katoh H."/>
            <person name="Sasamoto S."/>
            <person name="Watanabe A."/>
            <person name="Iriguchi M."/>
            <person name="Kawashima K."/>
            <person name="Kimura T."/>
            <person name="Kishida Y."/>
            <person name="Kiyokawa C."/>
            <person name="Kohara M."/>
            <person name="Matsumoto M."/>
            <person name="Matsuno A."/>
            <person name="Nakazaki N."/>
            <person name="Shimpo S."/>
            <person name="Sugimoto M."/>
            <person name="Takeuchi C."/>
            <person name="Yamada M."/>
            <person name="Tabata S."/>
        </authorList>
    </citation>
    <scope>NUCLEOTIDE SEQUENCE [LARGE SCALE GENOMIC DNA]</scope>
    <source>
        <strain>NIES-2133 / IAM M-273 / BP-1</strain>
    </source>
</reference>
<reference key="2">
    <citation type="journal article" date="2008" name="Acta Biochim. Pol.">
        <title>Heterologous expression and initial characterization of recombinant RbcX protein from Thermosynechococcus elongatus BP-1 and the role of RbcX in RuBisCO assembly.</title>
        <authorList>
            <person name="Tarnawski M."/>
            <person name="Gubernator B."/>
            <person name="Kolesinski P."/>
            <person name="Szczepaniak A."/>
        </authorList>
    </citation>
    <scope>FUNCTION</scope>
    <scope>SUBUNIT</scope>
    <scope>SUBCELLULAR LOCATION</scope>
    <source>
        <strain>NIES-2133 / IAM M-273 / BP-1</strain>
    </source>
</reference>
<reference evidence="8" key="3">
    <citation type="journal article" date="2011" name="Acta Crystallogr. F Struct. Biol. Commun.">
        <title>Structure of the RuBisCO chaperone RbcX from the thermophilic cyanobacterium Thermosynechococcus elongatus.</title>
        <authorList>
            <person name="Tarnawski M."/>
            <person name="Krzywda S."/>
            <person name="Bialek W."/>
            <person name="Jaskolski M."/>
            <person name="Szczepaniak A."/>
        </authorList>
    </citation>
    <scope>X-RAY CRYSTALLOGRAPHY (1.71 ANGSTROMS)</scope>
    <scope>SUBUNIT</scope>
    <scope>MUTAGENESIS OF CYS-103</scope>
    <source>
        <strain>NIES-2133 / IAM M-273 / BP-1</strain>
    </source>
</reference>
<gene>
    <name evidence="2 5" type="primary">rbcX</name>
    <name type="ordered locus">tll1505</name>
</gene>
<protein>
    <recommendedName>
        <fullName evidence="2 5">RuBisCO chaperone RbcX</fullName>
    </recommendedName>
</protein>
<proteinExistence type="evidence at protein level"/>
<feature type="chain" id="PRO_0000451304" description="RuBisCO chaperone RbcX">
    <location>
        <begin position="1"/>
        <end position="126"/>
    </location>
</feature>
<feature type="mutagenesis site" description="Can be readily crystallized, functions in RbcL8 assembly in E.coli." evidence="7">
    <original>C</original>
    <variation>A</variation>
    <location>
        <position position="103"/>
    </location>
</feature>
<feature type="helix" evidence="9">
    <location>
        <begin position="3"/>
        <end position="33"/>
    </location>
</feature>
<feature type="helix" evidence="9">
    <location>
        <begin position="35"/>
        <end position="48"/>
    </location>
</feature>
<feature type="helix" evidence="9">
    <location>
        <begin position="53"/>
        <end position="63"/>
    </location>
</feature>
<feature type="helix" evidence="9">
    <location>
        <begin position="65"/>
        <end position="82"/>
    </location>
</feature>
<feature type="helix" evidence="9">
    <location>
        <begin position="83"/>
        <end position="85"/>
    </location>
</feature>
<feature type="helix" evidence="9">
    <location>
        <begin position="86"/>
        <end position="111"/>
    </location>
</feature>
<keyword id="KW-0002">3D-structure</keyword>
<keyword id="KW-1283">Bacterial microcompartment</keyword>
<keyword id="KW-0120">Carbon dioxide fixation</keyword>
<keyword id="KW-1282">Carboxysome</keyword>
<keyword id="KW-0143">Chaperone</keyword>
<keyword id="KW-0963">Cytoplasm</keyword>
<keyword id="KW-0602">Photosynthesis</keyword>
<keyword id="KW-1185">Reference proteome</keyword>
<name>RBCX_THEVB</name>